<protein>
    <recommendedName>
        <fullName evidence="1">Phosphoglycerate kinase</fullName>
        <ecNumber evidence="1">2.7.2.3</ecNumber>
    </recommendedName>
</protein>
<gene>
    <name evidence="1" type="primary">pgk</name>
    <name type="ordered locus">EcolC_0784</name>
</gene>
<comment type="catalytic activity">
    <reaction evidence="1">
        <text>(2R)-3-phosphoglycerate + ATP = (2R)-3-phospho-glyceroyl phosphate + ADP</text>
        <dbReference type="Rhea" id="RHEA:14801"/>
        <dbReference type="ChEBI" id="CHEBI:30616"/>
        <dbReference type="ChEBI" id="CHEBI:57604"/>
        <dbReference type="ChEBI" id="CHEBI:58272"/>
        <dbReference type="ChEBI" id="CHEBI:456216"/>
        <dbReference type="EC" id="2.7.2.3"/>
    </reaction>
</comment>
<comment type="pathway">
    <text evidence="1">Carbohydrate degradation; glycolysis; pyruvate from D-glyceraldehyde 3-phosphate: step 2/5.</text>
</comment>
<comment type="subunit">
    <text evidence="1">Monomer.</text>
</comment>
<comment type="subcellular location">
    <subcellularLocation>
        <location evidence="1">Cytoplasm</location>
    </subcellularLocation>
</comment>
<comment type="similarity">
    <text evidence="1">Belongs to the phosphoglycerate kinase family.</text>
</comment>
<reference key="1">
    <citation type="submission" date="2008-02" db="EMBL/GenBank/DDBJ databases">
        <title>Complete sequence of Escherichia coli C str. ATCC 8739.</title>
        <authorList>
            <person name="Copeland A."/>
            <person name="Lucas S."/>
            <person name="Lapidus A."/>
            <person name="Glavina del Rio T."/>
            <person name="Dalin E."/>
            <person name="Tice H."/>
            <person name="Bruce D."/>
            <person name="Goodwin L."/>
            <person name="Pitluck S."/>
            <person name="Kiss H."/>
            <person name="Brettin T."/>
            <person name="Detter J.C."/>
            <person name="Han C."/>
            <person name="Kuske C.R."/>
            <person name="Schmutz J."/>
            <person name="Larimer F."/>
            <person name="Land M."/>
            <person name="Hauser L."/>
            <person name="Kyrpides N."/>
            <person name="Mikhailova N."/>
            <person name="Ingram L."/>
            <person name="Richardson P."/>
        </authorList>
    </citation>
    <scope>NUCLEOTIDE SEQUENCE [LARGE SCALE GENOMIC DNA]</scope>
    <source>
        <strain>ATCC 8739 / DSM 1576 / NBRC 3972 / NCIMB 8545 / WDCM 00012 / Crooks</strain>
    </source>
</reference>
<proteinExistence type="inferred from homology"/>
<accession>B1IT77</accession>
<sequence length="387" mass="41118">MSVIKMTDLDLAGKRVFIRADLNVPVKDGKVTSDARIRASLPTIELALKQGAKVMVTSHLGRPTEGEYNEEFSLLPVVNYLKDKLSNPVRLVKDYLDGVDVAEGELVVLENVRFNKGEKKDDETLSKKYAALCDVFVMDAFGTAHRAQASTHGIGKFADVACAGPLLAAELDALGKALKEPARPMVAIVGGSKVSTKLTVLDSLSKIADQLIVGGGIANTFIAAQGHDVGKSLYEADLVDEAKRLLTTCNIPVPSDVRVATEFSETAPATLKSVNDVKADEQILDIGDASAQELAEILKNAKTILWNGPVGVFEFPNFRKGTEIVANAIADSEAFSIAGGGDTLAAIDLFGIADKISYISTGGGAFLEFVEGKVLPAVAMLEERAKK</sequence>
<evidence type="ECO:0000255" key="1">
    <source>
        <dbReference type="HAMAP-Rule" id="MF_00145"/>
    </source>
</evidence>
<name>PGK_ECOLC</name>
<keyword id="KW-0007">Acetylation</keyword>
<keyword id="KW-0067">ATP-binding</keyword>
<keyword id="KW-0963">Cytoplasm</keyword>
<keyword id="KW-0324">Glycolysis</keyword>
<keyword id="KW-0418">Kinase</keyword>
<keyword id="KW-0547">Nucleotide-binding</keyword>
<keyword id="KW-0808">Transferase</keyword>
<dbReference type="EC" id="2.7.2.3" evidence="1"/>
<dbReference type="EMBL" id="CP000946">
    <property type="protein sequence ID" value="ACA76456.1"/>
    <property type="molecule type" value="Genomic_DNA"/>
</dbReference>
<dbReference type="RefSeq" id="WP_000111269.1">
    <property type="nucleotide sequence ID" value="NZ_MTFT01000004.1"/>
</dbReference>
<dbReference type="SMR" id="B1IT77"/>
<dbReference type="GeneID" id="89517738"/>
<dbReference type="KEGG" id="ecl:EcolC_0784"/>
<dbReference type="HOGENOM" id="CLU_025427_0_2_6"/>
<dbReference type="UniPathway" id="UPA00109">
    <property type="reaction ID" value="UER00185"/>
</dbReference>
<dbReference type="GO" id="GO:0005829">
    <property type="term" value="C:cytosol"/>
    <property type="evidence" value="ECO:0007669"/>
    <property type="project" value="TreeGrafter"/>
</dbReference>
<dbReference type="GO" id="GO:0043531">
    <property type="term" value="F:ADP binding"/>
    <property type="evidence" value="ECO:0007669"/>
    <property type="project" value="TreeGrafter"/>
</dbReference>
<dbReference type="GO" id="GO:0005524">
    <property type="term" value="F:ATP binding"/>
    <property type="evidence" value="ECO:0007669"/>
    <property type="project" value="UniProtKB-KW"/>
</dbReference>
<dbReference type="GO" id="GO:0004618">
    <property type="term" value="F:phosphoglycerate kinase activity"/>
    <property type="evidence" value="ECO:0007669"/>
    <property type="project" value="UniProtKB-UniRule"/>
</dbReference>
<dbReference type="GO" id="GO:0006094">
    <property type="term" value="P:gluconeogenesis"/>
    <property type="evidence" value="ECO:0007669"/>
    <property type="project" value="TreeGrafter"/>
</dbReference>
<dbReference type="GO" id="GO:0006096">
    <property type="term" value="P:glycolytic process"/>
    <property type="evidence" value="ECO:0007669"/>
    <property type="project" value="UniProtKB-UniRule"/>
</dbReference>
<dbReference type="CDD" id="cd00318">
    <property type="entry name" value="Phosphoglycerate_kinase"/>
    <property type="match status" value="1"/>
</dbReference>
<dbReference type="FunFam" id="3.40.50.1260:FF:000001">
    <property type="entry name" value="Phosphoglycerate kinase"/>
    <property type="match status" value="1"/>
</dbReference>
<dbReference type="FunFam" id="3.40.50.1260:FF:000002">
    <property type="entry name" value="Phosphoglycerate kinase"/>
    <property type="match status" value="1"/>
</dbReference>
<dbReference type="Gene3D" id="3.40.50.1260">
    <property type="entry name" value="Phosphoglycerate kinase, N-terminal domain"/>
    <property type="match status" value="2"/>
</dbReference>
<dbReference type="HAMAP" id="MF_00145">
    <property type="entry name" value="Phosphoglyc_kinase"/>
    <property type="match status" value="1"/>
</dbReference>
<dbReference type="InterPro" id="IPR001576">
    <property type="entry name" value="Phosphoglycerate_kinase"/>
</dbReference>
<dbReference type="InterPro" id="IPR015911">
    <property type="entry name" value="Phosphoglycerate_kinase_CS"/>
</dbReference>
<dbReference type="InterPro" id="IPR015824">
    <property type="entry name" value="Phosphoglycerate_kinase_N"/>
</dbReference>
<dbReference type="InterPro" id="IPR036043">
    <property type="entry name" value="Phosphoglycerate_kinase_sf"/>
</dbReference>
<dbReference type="PANTHER" id="PTHR11406">
    <property type="entry name" value="PHOSPHOGLYCERATE KINASE"/>
    <property type="match status" value="1"/>
</dbReference>
<dbReference type="PANTHER" id="PTHR11406:SF23">
    <property type="entry name" value="PHOSPHOGLYCERATE KINASE 1, CHLOROPLASTIC-RELATED"/>
    <property type="match status" value="1"/>
</dbReference>
<dbReference type="Pfam" id="PF00162">
    <property type="entry name" value="PGK"/>
    <property type="match status" value="1"/>
</dbReference>
<dbReference type="PIRSF" id="PIRSF000724">
    <property type="entry name" value="Pgk"/>
    <property type="match status" value="1"/>
</dbReference>
<dbReference type="PRINTS" id="PR00477">
    <property type="entry name" value="PHGLYCKINASE"/>
</dbReference>
<dbReference type="SUPFAM" id="SSF53748">
    <property type="entry name" value="Phosphoglycerate kinase"/>
    <property type="match status" value="1"/>
</dbReference>
<dbReference type="PROSITE" id="PS00111">
    <property type="entry name" value="PGLYCERATE_KINASE"/>
    <property type="match status" value="1"/>
</dbReference>
<organism>
    <name type="scientific">Escherichia coli (strain ATCC 8739 / DSM 1576 / NBRC 3972 / NCIMB 8545 / WDCM 00012 / Crooks)</name>
    <dbReference type="NCBI Taxonomy" id="481805"/>
    <lineage>
        <taxon>Bacteria</taxon>
        <taxon>Pseudomonadati</taxon>
        <taxon>Pseudomonadota</taxon>
        <taxon>Gammaproteobacteria</taxon>
        <taxon>Enterobacterales</taxon>
        <taxon>Enterobacteriaceae</taxon>
        <taxon>Escherichia</taxon>
    </lineage>
</organism>
<feature type="chain" id="PRO_1000076587" description="Phosphoglycerate kinase">
    <location>
        <begin position="1"/>
        <end position="387"/>
    </location>
</feature>
<feature type="binding site" evidence="1">
    <location>
        <begin position="21"/>
        <end position="23"/>
    </location>
    <ligand>
        <name>substrate</name>
    </ligand>
</feature>
<feature type="binding site" evidence="1">
    <location>
        <position position="36"/>
    </location>
    <ligand>
        <name>substrate</name>
    </ligand>
</feature>
<feature type="binding site" evidence="1">
    <location>
        <begin position="59"/>
        <end position="62"/>
    </location>
    <ligand>
        <name>substrate</name>
    </ligand>
</feature>
<feature type="binding site" evidence="1">
    <location>
        <position position="113"/>
    </location>
    <ligand>
        <name>substrate</name>
    </ligand>
</feature>
<feature type="binding site" evidence="1">
    <location>
        <position position="146"/>
    </location>
    <ligand>
        <name>substrate</name>
    </ligand>
</feature>
<feature type="binding site" evidence="1">
    <location>
        <position position="197"/>
    </location>
    <ligand>
        <name>ATP</name>
        <dbReference type="ChEBI" id="CHEBI:30616"/>
    </ligand>
</feature>
<feature type="binding site" evidence="1">
    <location>
        <position position="314"/>
    </location>
    <ligand>
        <name>ATP</name>
        <dbReference type="ChEBI" id="CHEBI:30616"/>
    </ligand>
</feature>
<feature type="binding site" evidence="1">
    <location>
        <begin position="340"/>
        <end position="343"/>
    </location>
    <ligand>
        <name>ATP</name>
        <dbReference type="ChEBI" id="CHEBI:30616"/>
    </ligand>
</feature>
<feature type="modified residue" description="N6-acetyllysine" evidence="1">
    <location>
        <position position="84"/>
    </location>
</feature>